<reference key="1">
    <citation type="submission" date="2003-02" db="EMBL/GenBank/DDBJ databases">
        <title>Complete nucleotide sequence of Pinus koraiensis.</title>
        <authorList>
            <person name="Noh E.W."/>
            <person name="Lee J.S."/>
            <person name="Choi Y.I."/>
            <person name="Han M.S."/>
            <person name="Yi Y.S."/>
            <person name="Han S.U."/>
        </authorList>
    </citation>
    <scope>NUCLEOTIDE SEQUENCE [LARGE SCALE GENOMIC DNA]</scope>
    <source>
        <strain>KangWon16</strain>
    </source>
</reference>
<comment type="subunit">
    <text evidence="1">Part of the 30S ribosomal subunit.</text>
</comment>
<comment type="subcellular location">
    <subcellularLocation>
        <location>Plastid</location>
        <location>Chloroplast</location>
    </subcellularLocation>
</comment>
<comment type="similarity">
    <text evidence="1">Belongs to the universal ribosomal protein uS11 family.</text>
</comment>
<name>RR11_PINKO</name>
<dbReference type="EMBL" id="AY228468">
    <property type="protein sequence ID" value="AAO74068.1"/>
    <property type="molecule type" value="Genomic_DNA"/>
</dbReference>
<dbReference type="RefSeq" id="NP_817220.1">
    <property type="nucleotide sequence ID" value="NC_004677.2"/>
</dbReference>
<dbReference type="SMR" id="Q85WZ9"/>
<dbReference type="GeneID" id="806942"/>
<dbReference type="GO" id="GO:0009507">
    <property type="term" value="C:chloroplast"/>
    <property type="evidence" value="ECO:0007669"/>
    <property type="project" value="UniProtKB-SubCell"/>
</dbReference>
<dbReference type="GO" id="GO:1990904">
    <property type="term" value="C:ribonucleoprotein complex"/>
    <property type="evidence" value="ECO:0007669"/>
    <property type="project" value="UniProtKB-KW"/>
</dbReference>
<dbReference type="GO" id="GO:0005840">
    <property type="term" value="C:ribosome"/>
    <property type="evidence" value="ECO:0007669"/>
    <property type="project" value="UniProtKB-KW"/>
</dbReference>
<dbReference type="GO" id="GO:0019843">
    <property type="term" value="F:rRNA binding"/>
    <property type="evidence" value="ECO:0007669"/>
    <property type="project" value="UniProtKB-UniRule"/>
</dbReference>
<dbReference type="GO" id="GO:0003735">
    <property type="term" value="F:structural constituent of ribosome"/>
    <property type="evidence" value="ECO:0007669"/>
    <property type="project" value="InterPro"/>
</dbReference>
<dbReference type="GO" id="GO:0006412">
    <property type="term" value="P:translation"/>
    <property type="evidence" value="ECO:0007669"/>
    <property type="project" value="UniProtKB-UniRule"/>
</dbReference>
<dbReference type="Gene3D" id="3.30.420.80">
    <property type="entry name" value="Ribosomal protein S11"/>
    <property type="match status" value="1"/>
</dbReference>
<dbReference type="HAMAP" id="MF_01310">
    <property type="entry name" value="Ribosomal_uS11"/>
    <property type="match status" value="1"/>
</dbReference>
<dbReference type="InterPro" id="IPR001971">
    <property type="entry name" value="Ribosomal_uS11"/>
</dbReference>
<dbReference type="InterPro" id="IPR019981">
    <property type="entry name" value="Ribosomal_uS11_bac-type"/>
</dbReference>
<dbReference type="InterPro" id="IPR018102">
    <property type="entry name" value="Ribosomal_uS11_CS"/>
</dbReference>
<dbReference type="InterPro" id="IPR036967">
    <property type="entry name" value="Ribosomal_uS11_sf"/>
</dbReference>
<dbReference type="NCBIfam" id="NF003698">
    <property type="entry name" value="PRK05309.1"/>
    <property type="match status" value="1"/>
</dbReference>
<dbReference type="NCBIfam" id="TIGR03632">
    <property type="entry name" value="uS11_bact"/>
    <property type="match status" value="1"/>
</dbReference>
<dbReference type="PANTHER" id="PTHR11759">
    <property type="entry name" value="40S RIBOSOMAL PROTEIN S14/30S RIBOSOMAL PROTEIN S11"/>
    <property type="match status" value="1"/>
</dbReference>
<dbReference type="Pfam" id="PF00411">
    <property type="entry name" value="Ribosomal_S11"/>
    <property type="match status" value="1"/>
</dbReference>
<dbReference type="PIRSF" id="PIRSF002131">
    <property type="entry name" value="Ribosomal_S11"/>
    <property type="match status" value="1"/>
</dbReference>
<dbReference type="SUPFAM" id="SSF53137">
    <property type="entry name" value="Translational machinery components"/>
    <property type="match status" value="1"/>
</dbReference>
<dbReference type="PROSITE" id="PS00054">
    <property type="entry name" value="RIBOSOMAL_S11"/>
    <property type="match status" value="1"/>
</dbReference>
<geneLocation type="chloroplast"/>
<protein>
    <recommendedName>
        <fullName evidence="1">Small ribosomal subunit protein uS11c</fullName>
    </recommendedName>
    <alternativeName>
        <fullName evidence="2">30S ribosomal protein S11, chloroplastic</fullName>
    </alternativeName>
</protein>
<keyword id="KW-0150">Chloroplast</keyword>
<keyword id="KW-0934">Plastid</keyword>
<keyword id="KW-0687">Ribonucleoprotein</keyword>
<keyword id="KW-0689">Ribosomal protein</keyword>
<keyword id="KW-0694">RNA-binding</keyword>
<keyword id="KW-0699">rRNA-binding</keyword>
<proteinExistence type="inferred from homology"/>
<feature type="chain" id="PRO_0000123321" description="Small ribosomal subunit protein uS11c">
    <location>
        <begin position="1"/>
        <end position="130"/>
    </location>
</feature>
<gene>
    <name evidence="1" type="primary">rps11</name>
</gene>
<organism>
    <name type="scientific">Pinus koraiensis</name>
    <name type="common">Korean pine</name>
    <dbReference type="NCBI Taxonomy" id="88728"/>
    <lineage>
        <taxon>Eukaryota</taxon>
        <taxon>Viridiplantae</taxon>
        <taxon>Streptophyta</taxon>
        <taxon>Embryophyta</taxon>
        <taxon>Tracheophyta</taxon>
        <taxon>Spermatophyta</taxon>
        <taxon>Pinopsida</taxon>
        <taxon>Pinidae</taxon>
        <taxon>Conifers I</taxon>
        <taxon>Pinales</taxon>
        <taxon>Pinaceae</taxon>
        <taxon>Pinus</taxon>
        <taxon>Pinus subgen. Strobus</taxon>
    </lineage>
</organism>
<accession>Q85WZ9</accession>
<sequence length="130" mass="14305">MSKTIKRIGSRRNEHRVLKGVIYVQASFNNTIVTATDVRGQVISWSSAGACGFKGTRRGTPFAAQTAAENVIRTLMDRGIGRVEVMISGPGRGRDTALRTIRRSGILLSFVRDVTPMPHNGCRPPKKRRV</sequence>
<evidence type="ECO:0000255" key="1">
    <source>
        <dbReference type="HAMAP-Rule" id="MF_01310"/>
    </source>
</evidence>
<evidence type="ECO:0000305" key="2"/>